<dbReference type="EMBL" id="CH902623">
    <property type="protein sequence ID" value="EDV30579.1"/>
    <property type="molecule type" value="Genomic_DNA"/>
</dbReference>
<dbReference type="SMR" id="B3MTI9"/>
<dbReference type="FunCoup" id="B3MTI9">
    <property type="interactions" value="461"/>
</dbReference>
<dbReference type="STRING" id="7217.B3MTI9"/>
<dbReference type="EnsemblMetazoa" id="FBtr0128075">
    <property type="protein sequence ID" value="FBpp0126567"/>
    <property type="gene ID" value="FBgn0100369"/>
</dbReference>
<dbReference type="EnsemblMetazoa" id="XM_001964747.4">
    <property type="protein sequence ID" value="XP_001964783.1"/>
    <property type="gene ID" value="LOC6506017"/>
</dbReference>
<dbReference type="GeneID" id="6506017"/>
<dbReference type="KEGG" id="dan:6506017"/>
<dbReference type="CTD" id="3772082"/>
<dbReference type="eggNOG" id="KOG1414">
    <property type="taxonomic scope" value="Eukaryota"/>
</dbReference>
<dbReference type="HOGENOM" id="CLU_020183_0_0_1"/>
<dbReference type="InParanoid" id="B3MTI9"/>
<dbReference type="OMA" id="HQSLHFA"/>
<dbReference type="OrthoDB" id="5866312at2759"/>
<dbReference type="PhylomeDB" id="B3MTI9"/>
<dbReference type="ChiTaRS" id="kay">
    <property type="organism name" value="fly"/>
</dbReference>
<dbReference type="Proteomes" id="UP000007801">
    <property type="component" value="Unassembled WGS sequence"/>
</dbReference>
<dbReference type="GO" id="GO:0005634">
    <property type="term" value="C:nucleus"/>
    <property type="evidence" value="ECO:0000250"/>
    <property type="project" value="UniProtKB"/>
</dbReference>
<dbReference type="GO" id="GO:0003677">
    <property type="term" value="F:DNA binding"/>
    <property type="evidence" value="ECO:0000250"/>
    <property type="project" value="UniProtKB"/>
</dbReference>
<dbReference type="GO" id="GO:0000981">
    <property type="term" value="F:DNA-binding transcription factor activity, RNA polymerase II-specific"/>
    <property type="evidence" value="ECO:0007669"/>
    <property type="project" value="TreeGrafter"/>
</dbReference>
<dbReference type="GO" id="GO:0000978">
    <property type="term" value="F:RNA polymerase II cis-regulatory region sequence-specific DNA binding"/>
    <property type="evidence" value="ECO:0007669"/>
    <property type="project" value="TreeGrafter"/>
</dbReference>
<dbReference type="GO" id="GO:0009792">
    <property type="term" value="P:embryo development ending in birth or egg hatching"/>
    <property type="evidence" value="ECO:0000250"/>
    <property type="project" value="UniProtKB"/>
</dbReference>
<dbReference type="CDD" id="cd14721">
    <property type="entry name" value="bZIP_Fos"/>
    <property type="match status" value="1"/>
</dbReference>
<dbReference type="FunFam" id="1.20.5.170:FF:000006">
    <property type="entry name" value="fos-related antigen 2 isoform X1"/>
    <property type="match status" value="1"/>
</dbReference>
<dbReference type="Gene3D" id="1.20.5.170">
    <property type="match status" value="1"/>
</dbReference>
<dbReference type="InterPro" id="IPR000837">
    <property type="entry name" value="AP-1"/>
</dbReference>
<dbReference type="InterPro" id="IPR004827">
    <property type="entry name" value="bZIP"/>
</dbReference>
<dbReference type="InterPro" id="IPR046347">
    <property type="entry name" value="bZIP_sf"/>
</dbReference>
<dbReference type="PANTHER" id="PTHR23351:SF24">
    <property type="entry name" value="ACTIVATING TRANSCRIPTION FACTOR 3-RELATED"/>
    <property type="match status" value="1"/>
</dbReference>
<dbReference type="PANTHER" id="PTHR23351">
    <property type="entry name" value="FOS TRANSCRIPTION FACTOR-RELATED"/>
    <property type="match status" value="1"/>
</dbReference>
<dbReference type="Pfam" id="PF00170">
    <property type="entry name" value="bZIP_1"/>
    <property type="match status" value="1"/>
</dbReference>
<dbReference type="PRINTS" id="PR00042">
    <property type="entry name" value="LEUZIPPRFOS"/>
</dbReference>
<dbReference type="SMART" id="SM00338">
    <property type="entry name" value="BRLZ"/>
    <property type="match status" value="1"/>
</dbReference>
<dbReference type="SUPFAM" id="SSF57959">
    <property type="entry name" value="Leucine zipper domain"/>
    <property type="match status" value="1"/>
</dbReference>
<dbReference type="PROSITE" id="PS50217">
    <property type="entry name" value="BZIP"/>
    <property type="match status" value="1"/>
</dbReference>
<dbReference type="PROSITE" id="PS00036">
    <property type="entry name" value="BZIP_BASIC"/>
    <property type="match status" value="1"/>
</dbReference>
<sequence>MTLDNYNIFNDEYLFGMPLSPLPKVLGTFDGIQLAPTLTTPTLTPTTTRSLQEAFFELTNDPGTPYQATFKPPPLGLMPGGNNGNGVTNVPTTTATATVVGVVNPMISQLPYEVNSALQGTDSDNSNASWADAQNNEDQDTTDTSSAHTDSTSYQNGHMAGSSVNGGGANNFTNVLAGINAGRGSTQGSNTNTSNSATPARRGGGRRPNRNTNMSPEEEEKRRIRRERNKQAAARCRKRRVDQTNELTYEVEQLEKKRDGLKKEMETLTDVKNQLEFFLRAHHSSCQKIRTDLLSVTTCNGLIAPVGLPSAGSCDSGSSSHHNNNSNDSSNGTITGLDASLNSTGRSNSPLDLKPQIKDEPLDGGLDSSCLLDQDGPPPSKRFPLPPMSTLMTPTGVSSGSLQTPIASTAPGGFGSAYPITTTKGSMNSPTLNELNKPKERPNTLAVQRPFVPQMHLNLTSNHNKMPGSGPTHIQGVPIQTPTTGFNFDSLMDGGTGLTPVSGPLVPSQNKHPLELPTPTAEPSKLVSL</sequence>
<feature type="chain" id="PRO_0000377382" description="Transcription factor kayak">
    <location>
        <begin position="1"/>
        <end position="529"/>
    </location>
</feature>
<feature type="domain" description="bZIP" evidence="4">
    <location>
        <begin position="219"/>
        <end position="282"/>
    </location>
</feature>
<feature type="region of interest" description="Disordered" evidence="5">
    <location>
        <begin position="118"/>
        <end position="166"/>
    </location>
</feature>
<feature type="region of interest" description="Disordered" evidence="5">
    <location>
        <begin position="180"/>
        <end position="239"/>
    </location>
</feature>
<feature type="region of interest" description="Basic motif" evidence="4">
    <location>
        <begin position="221"/>
        <end position="240"/>
    </location>
</feature>
<feature type="region of interest" description="Leucine-zipper" evidence="4">
    <location>
        <begin position="247"/>
        <end position="275"/>
    </location>
</feature>
<feature type="region of interest" description="Disordered" evidence="5">
    <location>
        <begin position="311"/>
        <end position="390"/>
    </location>
</feature>
<feature type="region of interest" description="Disordered" evidence="5">
    <location>
        <begin position="493"/>
        <end position="529"/>
    </location>
</feature>
<feature type="compositionally biased region" description="Polar residues" evidence="5">
    <location>
        <begin position="118"/>
        <end position="134"/>
    </location>
</feature>
<feature type="compositionally biased region" description="Low complexity" evidence="5">
    <location>
        <begin position="142"/>
        <end position="153"/>
    </location>
</feature>
<feature type="compositionally biased region" description="Low complexity" evidence="5">
    <location>
        <begin position="182"/>
        <end position="201"/>
    </location>
</feature>
<feature type="compositionally biased region" description="Low complexity" evidence="5">
    <location>
        <begin position="315"/>
        <end position="332"/>
    </location>
</feature>
<feature type="compositionally biased region" description="Polar residues" evidence="5">
    <location>
        <begin position="340"/>
        <end position="350"/>
    </location>
</feature>
<feature type="compositionally biased region" description="Low complexity" evidence="5">
    <location>
        <begin position="363"/>
        <end position="375"/>
    </location>
</feature>
<feature type="compositionally biased region" description="Pro residues" evidence="5">
    <location>
        <begin position="376"/>
        <end position="387"/>
    </location>
</feature>
<feature type="modified residue" description="Phosphoserine" evidence="2">
    <location>
        <position position="349"/>
    </location>
</feature>
<reference evidence="6" key="1">
    <citation type="journal article" date="2007" name="Nature">
        <title>Evolution of genes and genomes on the Drosophila phylogeny.</title>
        <authorList>
            <consortium name="Drosophila 12 genomes consortium"/>
        </authorList>
    </citation>
    <scope>NUCLEOTIDE SEQUENCE [LARGE SCALE GENOMIC DNA]</scope>
    <source>
        <strain evidence="6">Tucson 14024-0371.13</strain>
    </source>
</reference>
<name>FOSL_DROAN</name>
<proteinExistence type="inferred from homology"/>
<gene>
    <name evidence="2" type="primary">kay</name>
    <name type="ORF">GF23375</name>
</gene>
<keyword id="KW-0010">Activator</keyword>
<keyword id="KW-0238">DNA-binding</keyword>
<keyword id="KW-0539">Nucleus</keyword>
<keyword id="KW-0597">Phosphoprotein</keyword>
<keyword id="KW-1185">Reference proteome</keyword>
<keyword id="KW-0804">Transcription</keyword>
<keyword id="KW-0805">Transcription regulation</keyword>
<protein>
    <recommendedName>
        <fullName evidence="2">Transcription factor kayak</fullName>
    </recommendedName>
</protein>
<comment type="function">
    <text evidence="1">Developmentally regulated transcription factor AP-1 binds and recognizes the enhancer DNA sequence: 5'-TGA[CG]TCA-3'. May play a role in the function or determination of a particular subset of cells in the developing embryo. Is able to carry out its function either independently of or in conjunction with Jra (By similarity).</text>
</comment>
<comment type="subunit">
    <text evidence="1">Homodimer. Heterodimer with Jra. The kay-Jra heterodimer binds more stably to the AP-1 site than either of the two proteins alone (By similarity).</text>
</comment>
<comment type="subcellular location">
    <subcellularLocation>
        <location evidence="2 4">Nucleus</location>
    </subcellularLocation>
</comment>
<comment type="similarity">
    <text evidence="3">Belongs to the bZIP family. Fos subfamily.</text>
</comment>
<organism>
    <name type="scientific">Drosophila ananassae</name>
    <name type="common">Fruit fly</name>
    <dbReference type="NCBI Taxonomy" id="7217"/>
    <lineage>
        <taxon>Eukaryota</taxon>
        <taxon>Metazoa</taxon>
        <taxon>Ecdysozoa</taxon>
        <taxon>Arthropoda</taxon>
        <taxon>Hexapoda</taxon>
        <taxon>Insecta</taxon>
        <taxon>Pterygota</taxon>
        <taxon>Neoptera</taxon>
        <taxon>Endopterygota</taxon>
        <taxon>Diptera</taxon>
        <taxon>Brachycera</taxon>
        <taxon>Muscomorpha</taxon>
        <taxon>Ephydroidea</taxon>
        <taxon>Drosophilidae</taxon>
        <taxon>Drosophila</taxon>
        <taxon>Sophophora</taxon>
    </lineage>
</organism>
<accession>B3MTI9</accession>
<evidence type="ECO:0000250" key="1"/>
<evidence type="ECO:0000250" key="2">
    <source>
        <dbReference type="UniProtKB" id="P21525"/>
    </source>
</evidence>
<evidence type="ECO:0000255" key="3"/>
<evidence type="ECO:0000255" key="4">
    <source>
        <dbReference type="PROSITE-ProRule" id="PRU00978"/>
    </source>
</evidence>
<evidence type="ECO:0000256" key="5">
    <source>
        <dbReference type="SAM" id="MobiDB-lite"/>
    </source>
</evidence>
<evidence type="ECO:0000312" key="6">
    <source>
        <dbReference type="EMBL" id="EDV30579.1"/>
    </source>
</evidence>